<sequence>MFLLGSGGKHFEDELRNAGAKILEVEIKRFPDGEKYVRVMGNGDEATVVSSTFYPQDEKIVELLLLGDALREKGFEKLKLVVPYFAYSRQDRVTKDGEPISVRAVMRALGIYYEELYIFDTHNPETLRFFPGKAVNVSPARVIGEYFREKLGDGLVLAPDKGALERARAVAEVLGLEYSHFEKRRISPTEVEMHPVDVDVKGKNVLIVDDIISTGGTMVRAAELLRKLGAKKIYVSATHGVFAEGAIERVSRAVDELAVTNTIPTPVSRISIVPELLKLE</sequence>
<evidence type="ECO:0000255" key="1">
    <source>
        <dbReference type="HAMAP-Rule" id="MF_00583"/>
    </source>
</evidence>
<evidence type="ECO:0000269" key="2">
    <source ref="1"/>
</evidence>
<evidence type="ECO:0000303" key="3">
    <source ref="1"/>
</evidence>
<accession>O52958</accession>
<name>KPRS_THEKO</name>
<comment type="function">
    <text evidence="1 2">Involved in the biosynthesis of the central metabolite phospho-alpha-D-ribosyl-1-pyrophosphate (PRPP) via the transfer of pyrophosphoryl group from ATP to 1-hydroxyl of ribose-5-phosphate (Rib-5-P). It can also use CTP and GTP as substrates in addition to ATP.</text>
</comment>
<comment type="catalytic activity">
    <reaction evidence="1 2">
        <text>D-ribose 5-phosphate + ATP = 5-phospho-alpha-D-ribose 1-diphosphate + AMP + H(+)</text>
        <dbReference type="Rhea" id="RHEA:15609"/>
        <dbReference type="ChEBI" id="CHEBI:15378"/>
        <dbReference type="ChEBI" id="CHEBI:30616"/>
        <dbReference type="ChEBI" id="CHEBI:58017"/>
        <dbReference type="ChEBI" id="CHEBI:78346"/>
        <dbReference type="ChEBI" id="CHEBI:456215"/>
        <dbReference type="EC" id="2.7.6.1"/>
    </reaction>
</comment>
<comment type="cofactor">
    <cofactor evidence="1">
        <name>Mg(2+)</name>
        <dbReference type="ChEBI" id="CHEBI:18420"/>
    </cofactor>
    <text evidence="1">Binds 2 Mg(2+) ions per subunit.</text>
</comment>
<comment type="activity regulation">
    <text evidence="2">Activated by Co(2+) and Ni(2+) ions, however Mg(2+) ion shows almost no significant effect on the activity. Equally inhibited by ADP, CTP and GTP, while dTTP and UTP are less inhibitory.</text>
</comment>
<comment type="biophysicochemical properties">
    <phDependence>
        <text evidence="2">Optimum pH is 7.</text>
    </phDependence>
    <temperatureDependence>
        <text evidence="2">Optimum temperature is 50 degrees Celsius. Half-life of the enzyme activity is 55 minutes at 70 degrees Celsius.</text>
    </temperatureDependence>
</comment>
<comment type="pathway">
    <text evidence="1">Metabolic intermediate biosynthesis; 5-phospho-alpha-D-ribose 1-diphosphate biosynthesis; 5-phospho-alpha-D-ribose 1-diphosphate from D-ribose 5-phosphate (route I): step 1/1.</text>
</comment>
<comment type="subcellular location">
    <subcellularLocation>
        <location evidence="1">Cytoplasm</location>
    </subcellularLocation>
</comment>
<comment type="similarity">
    <text evidence="1">Belongs to the ribose-phosphate pyrophosphokinase family. Class III (archaeal) subfamily.</text>
</comment>
<organism>
    <name type="scientific">Thermococcus kodakarensis (strain ATCC BAA-918 / JCM 12380 / KOD1)</name>
    <name type="common">Pyrococcus kodakaraensis (strain KOD1)</name>
    <dbReference type="NCBI Taxonomy" id="69014"/>
    <lineage>
        <taxon>Archaea</taxon>
        <taxon>Methanobacteriati</taxon>
        <taxon>Methanobacteriota</taxon>
        <taxon>Thermococci</taxon>
        <taxon>Thermococcales</taxon>
        <taxon>Thermococcaceae</taxon>
        <taxon>Thermococcus</taxon>
    </lineage>
</organism>
<gene>
    <name evidence="1" type="primary">prs</name>
    <name evidence="3" type="synonym">Pk-rppk</name>
    <name type="ordered locus">TK2235</name>
</gene>
<protein>
    <recommendedName>
        <fullName evidence="1 3">Ribose-phosphate pyrophosphokinase</fullName>
        <shortName evidence="1 3">RPPK</shortName>
        <ecNumber evidence="1 2">2.7.6.1</ecNumber>
    </recommendedName>
    <alternativeName>
        <fullName evidence="1">5-phospho-D-ribosyl alpha-1-diphosphate synthase</fullName>
    </alternativeName>
    <alternativeName>
        <fullName evidence="1">Phosphoribosyl diphosphate synthase</fullName>
    </alternativeName>
    <alternativeName>
        <fullName evidence="1">Phosphoribosyl pyrophosphate synthase</fullName>
        <shortName evidence="1">P-Rib-PP synthase</shortName>
        <shortName evidence="1">PRPP synthase</shortName>
        <shortName evidence="1">PRPPase</shortName>
    </alternativeName>
</protein>
<proteinExistence type="evidence at protein level"/>
<reference key="1">
    <citation type="journal article" date="1997" name="J. Ferment. Bioeng.">
        <title>Gene cloning and characterization of recombinant ribose phosphate pyrophosphokinase from a hyperthermophilic archaeon.</title>
        <authorList>
            <person name="Rashid N."/>
            <person name="Morikawa M."/>
            <person name="Imanaka T."/>
        </authorList>
    </citation>
    <scope>NUCLEOTIDE SEQUENCE [GENOMIC DNA]</scope>
    <scope>FUNCTION</scope>
    <scope>CATALYTIC ACTIVITY</scope>
    <scope>BIOPHYSICOCHEMICAL PROPERTIES</scope>
    <scope>ACTIVITY REGULATION</scope>
    <scope>SUBSTRATE SPECIFICITY</scope>
    <source>
        <strain>ATCC BAA-918 / JCM 12380 / KOD1</strain>
    </source>
</reference>
<reference key="2">
    <citation type="journal article" date="2005" name="Genome Res.">
        <title>Complete genome sequence of the hyperthermophilic archaeon Thermococcus kodakaraensis KOD1 and comparison with Pyrococcus genomes.</title>
        <authorList>
            <person name="Fukui T."/>
            <person name="Atomi H."/>
            <person name="Kanai T."/>
            <person name="Matsumi R."/>
            <person name="Fujiwara S."/>
            <person name="Imanaka T."/>
        </authorList>
    </citation>
    <scope>NUCLEOTIDE SEQUENCE [LARGE SCALE GENOMIC DNA]</scope>
    <source>
        <strain>ATCC BAA-918 / JCM 12380 / KOD1</strain>
    </source>
</reference>
<feature type="chain" id="PRO_0000141246" description="Ribose-phosphate pyrophosphokinase">
    <location>
        <begin position="1"/>
        <end position="280"/>
    </location>
</feature>
<feature type="active site" evidence="1">
    <location>
        <position position="183"/>
    </location>
</feature>
<feature type="binding site" evidence="1">
    <location>
        <begin position="32"/>
        <end position="34"/>
    </location>
    <ligand>
        <name>ATP</name>
        <dbReference type="ChEBI" id="CHEBI:30616"/>
    </ligand>
</feature>
<feature type="binding site" evidence="1">
    <location>
        <begin position="89"/>
        <end position="90"/>
    </location>
    <ligand>
        <name>ATP</name>
        <dbReference type="ChEBI" id="CHEBI:30616"/>
    </ligand>
</feature>
<feature type="binding site" evidence="1">
    <location>
        <position position="122"/>
    </location>
    <ligand>
        <name>Mg(2+)</name>
        <dbReference type="ChEBI" id="CHEBI:18420"/>
        <label>1</label>
    </ligand>
</feature>
<feature type="binding site" evidence="1">
    <location>
        <position position="160"/>
    </location>
    <ligand>
        <name>Mg(2+)</name>
        <dbReference type="ChEBI" id="CHEBI:18420"/>
        <label>2</label>
    </ligand>
</feature>
<feature type="binding site" evidence="1">
    <location>
        <position position="185"/>
    </location>
    <ligand>
        <name>D-ribose 5-phosphate</name>
        <dbReference type="ChEBI" id="CHEBI:78346"/>
    </ligand>
</feature>
<feature type="binding site" evidence="1">
    <location>
        <position position="209"/>
    </location>
    <ligand>
        <name>D-ribose 5-phosphate</name>
        <dbReference type="ChEBI" id="CHEBI:78346"/>
    </ligand>
</feature>
<feature type="binding site" evidence="1">
    <location>
        <begin position="213"/>
        <end position="217"/>
    </location>
    <ligand>
        <name>D-ribose 5-phosphate</name>
        <dbReference type="ChEBI" id="CHEBI:78346"/>
    </ligand>
</feature>
<keyword id="KW-0067">ATP-binding</keyword>
<keyword id="KW-0963">Cytoplasm</keyword>
<keyword id="KW-0418">Kinase</keyword>
<keyword id="KW-0460">Magnesium</keyword>
<keyword id="KW-0479">Metal-binding</keyword>
<keyword id="KW-0545">Nucleotide biosynthesis</keyword>
<keyword id="KW-0547">Nucleotide-binding</keyword>
<keyword id="KW-1185">Reference proteome</keyword>
<keyword id="KW-0808">Transferase</keyword>
<dbReference type="EC" id="2.7.6.1" evidence="1 2"/>
<dbReference type="EMBL" id="D78364">
    <property type="protein sequence ID" value="BAA24158.1"/>
    <property type="molecule type" value="Genomic_DNA"/>
</dbReference>
<dbReference type="EMBL" id="AP006878">
    <property type="protein sequence ID" value="BAD86424.1"/>
    <property type="molecule type" value="Genomic_DNA"/>
</dbReference>
<dbReference type="RefSeq" id="WP_011251185.1">
    <property type="nucleotide sequence ID" value="NC_006624.1"/>
</dbReference>
<dbReference type="SMR" id="O52958"/>
<dbReference type="FunCoup" id="O52958">
    <property type="interactions" value="157"/>
</dbReference>
<dbReference type="STRING" id="69014.TK2235"/>
<dbReference type="EnsemblBacteria" id="BAD86424">
    <property type="protein sequence ID" value="BAD86424"/>
    <property type="gene ID" value="TK2235"/>
</dbReference>
<dbReference type="GeneID" id="78448775"/>
<dbReference type="KEGG" id="tko:TK2235"/>
<dbReference type="PATRIC" id="fig|69014.16.peg.2190"/>
<dbReference type="eggNOG" id="arCOG00067">
    <property type="taxonomic scope" value="Archaea"/>
</dbReference>
<dbReference type="HOGENOM" id="CLU_033546_2_2_2"/>
<dbReference type="InParanoid" id="O52958"/>
<dbReference type="OrthoDB" id="371997at2157"/>
<dbReference type="PhylomeDB" id="O52958"/>
<dbReference type="UniPathway" id="UPA00087">
    <property type="reaction ID" value="UER00172"/>
</dbReference>
<dbReference type="Proteomes" id="UP000000536">
    <property type="component" value="Chromosome"/>
</dbReference>
<dbReference type="GO" id="GO:0005737">
    <property type="term" value="C:cytoplasm"/>
    <property type="evidence" value="ECO:0000318"/>
    <property type="project" value="GO_Central"/>
</dbReference>
<dbReference type="GO" id="GO:0002189">
    <property type="term" value="C:ribose phosphate diphosphokinase complex"/>
    <property type="evidence" value="ECO:0000318"/>
    <property type="project" value="GO_Central"/>
</dbReference>
<dbReference type="GO" id="GO:0005524">
    <property type="term" value="F:ATP binding"/>
    <property type="evidence" value="ECO:0007669"/>
    <property type="project" value="UniProtKB-KW"/>
</dbReference>
<dbReference type="GO" id="GO:0016301">
    <property type="term" value="F:kinase activity"/>
    <property type="evidence" value="ECO:0007669"/>
    <property type="project" value="UniProtKB-KW"/>
</dbReference>
<dbReference type="GO" id="GO:0000287">
    <property type="term" value="F:magnesium ion binding"/>
    <property type="evidence" value="ECO:0007669"/>
    <property type="project" value="UniProtKB-UniRule"/>
</dbReference>
<dbReference type="GO" id="GO:0004749">
    <property type="term" value="F:ribose phosphate diphosphokinase activity"/>
    <property type="evidence" value="ECO:0000318"/>
    <property type="project" value="GO_Central"/>
</dbReference>
<dbReference type="GO" id="GO:0006015">
    <property type="term" value="P:5-phosphoribose 1-diphosphate biosynthetic process"/>
    <property type="evidence" value="ECO:0000318"/>
    <property type="project" value="GO_Central"/>
</dbReference>
<dbReference type="GO" id="GO:0006164">
    <property type="term" value="P:purine nucleotide biosynthetic process"/>
    <property type="evidence" value="ECO:0000318"/>
    <property type="project" value="GO_Central"/>
</dbReference>
<dbReference type="CDD" id="cd06223">
    <property type="entry name" value="PRTases_typeI"/>
    <property type="match status" value="1"/>
</dbReference>
<dbReference type="FunFam" id="3.40.50.2020:FF:000074">
    <property type="entry name" value="Ribose-phosphate pyrophosphokinase"/>
    <property type="match status" value="1"/>
</dbReference>
<dbReference type="Gene3D" id="3.40.50.2020">
    <property type="match status" value="2"/>
</dbReference>
<dbReference type="HAMAP" id="MF_00583_A">
    <property type="entry name" value="RibP_PPkinase_A"/>
    <property type="match status" value="1"/>
</dbReference>
<dbReference type="InterPro" id="IPR029099">
    <property type="entry name" value="Pribosyltran_N"/>
</dbReference>
<dbReference type="InterPro" id="IPR000836">
    <property type="entry name" value="PRibTrfase_dom"/>
</dbReference>
<dbReference type="InterPro" id="IPR029057">
    <property type="entry name" value="PRTase-like"/>
</dbReference>
<dbReference type="InterPro" id="IPR005946">
    <property type="entry name" value="Rib-P_diPkinase"/>
</dbReference>
<dbReference type="InterPro" id="IPR037514">
    <property type="entry name" value="Rib-P_diPkinase_arc"/>
</dbReference>
<dbReference type="NCBIfam" id="NF002095">
    <property type="entry name" value="PRK00934.1"/>
    <property type="match status" value="1"/>
</dbReference>
<dbReference type="NCBIfam" id="TIGR01251">
    <property type="entry name" value="ribP_PPkin"/>
    <property type="match status" value="1"/>
</dbReference>
<dbReference type="PANTHER" id="PTHR10210">
    <property type="entry name" value="RIBOSE-PHOSPHATE DIPHOSPHOKINASE FAMILY MEMBER"/>
    <property type="match status" value="1"/>
</dbReference>
<dbReference type="PANTHER" id="PTHR10210:SF32">
    <property type="entry name" value="RIBOSE-PHOSPHATE PYROPHOSPHOKINASE 2"/>
    <property type="match status" value="1"/>
</dbReference>
<dbReference type="Pfam" id="PF14572">
    <property type="entry name" value="Pribosyl_synth"/>
    <property type="match status" value="1"/>
</dbReference>
<dbReference type="Pfam" id="PF13793">
    <property type="entry name" value="Pribosyltran_N"/>
    <property type="match status" value="1"/>
</dbReference>
<dbReference type="SMART" id="SM01400">
    <property type="entry name" value="Pribosyltran_N"/>
    <property type="match status" value="1"/>
</dbReference>
<dbReference type="SUPFAM" id="SSF53271">
    <property type="entry name" value="PRTase-like"/>
    <property type="match status" value="1"/>
</dbReference>